<accession>P52116</accession>
<accession>Q9KTQ3</accession>
<dbReference type="EMBL" id="AE003852">
    <property type="protein sequence ID" value="AAF94010.1"/>
    <property type="molecule type" value="Genomic_DNA"/>
</dbReference>
<dbReference type="PIR" id="C82272">
    <property type="entry name" value="C82272"/>
</dbReference>
<dbReference type="RefSeq" id="NP_230495.1">
    <property type="nucleotide sequence ID" value="NC_002505.1"/>
</dbReference>
<dbReference type="RefSeq" id="WP_000162689.1">
    <property type="nucleotide sequence ID" value="NZ_LT906614.1"/>
</dbReference>
<dbReference type="SMR" id="P52116"/>
<dbReference type="STRING" id="243277.VC_0848"/>
<dbReference type="DNASU" id="2614515"/>
<dbReference type="EnsemblBacteria" id="AAF94010">
    <property type="protein sequence ID" value="AAF94010"/>
    <property type="gene ID" value="VC_0848"/>
</dbReference>
<dbReference type="GeneID" id="89515035"/>
<dbReference type="KEGG" id="vch:VC_0848"/>
<dbReference type="PATRIC" id="fig|243277.26.peg.808"/>
<dbReference type="eggNOG" id="COG0691">
    <property type="taxonomic scope" value="Bacteria"/>
</dbReference>
<dbReference type="HOGENOM" id="CLU_108953_3_0_6"/>
<dbReference type="Proteomes" id="UP000000584">
    <property type="component" value="Chromosome 1"/>
</dbReference>
<dbReference type="GO" id="GO:0005829">
    <property type="term" value="C:cytosol"/>
    <property type="evidence" value="ECO:0000318"/>
    <property type="project" value="GO_Central"/>
</dbReference>
<dbReference type="GO" id="GO:0003723">
    <property type="term" value="F:RNA binding"/>
    <property type="evidence" value="ECO:0000318"/>
    <property type="project" value="GO_Central"/>
</dbReference>
<dbReference type="GO" id="GO:0070929">
    <property type="term" value="P:trans-translation"/>
    <property type="evidence" value="ECO:0007669"/>
    <property type="project" value="UniProtKB-UniRule"/>
</dbReference>
<dbReference type="CDD" id="cd09294">
    <property type="entry name" value="SmpB"/>
    <property type="match status" value="1"/>
</dbReference>
<dbReference type="Gene3D" id="2.40.280.10">
    <property type="match status" value="1"/>
</dbReference>
<dbReference type="HAMAP" id="MF_00023">
    <property type="entry name" value="SmpB"/>
    <property type="match status" value="1"/>
</dbReference>
<dbReference type="InterPro" id="IPR023620">
    <property type="entry name" value="SmpB"/>
</dbReference>
<dbReference type="InterPro" id="IPR000037">
    <property type="entry name" value="SsrA-bd_prot"/>
</dbReference>
<dbReference type="InterPro" id="IPR020081">
    <property type="entry name" value="SsrA-bd_prot_CS"/>
</dbReference>
<dbReference type="NCBIfam" id="NF003843">
    <property type="entry name" value="PRK05422.1"/>
    <property type="match status" value="1"/>
</dbReference>
<dbReference type="NCBIfam" id="TIGR00086">
    <property type="entry name" value="smpB"/>
    <property type="match status" value="1"/>
</dbReference>
<dbReference type="PANTHER" id="PTHR30308:SF2">
    <property type="entry name" value="SSRA-BINDING PROTEIN"/>
    <property type="match status" value="1"/>
</dbReference>
<dbReference type="PANTHER" id="PTHR30308">
    <property type="entry name" value="TMRNA-BINDING COMPONENT OF TRANS-TRANSLATION TAGGING COMPLEX"/>
    <property type="match status" value="1"/>
</dbReference>
<dbReference type="Pfam" id="PF01668">
    <property type="entry name" value="SmpB"/>
    <property type="match status" value="1"/>
</dbReference>
<dbReference type="SUPFAM" id="SSF74982">
    <property type="entry name" value="Small protein B (SmpB)"/>
    <property type="match status" value="1"/>
</dbReference>
<dbReference type="PROSITE" id="PS01317">
    <property type="entry name" value="SSRP"/>
    <property type="match status" value="1"/>
</dbReference>
<reference key="1">
    <citation type="journal article" date="2000" name="Nature">
        <title>DNA sequence of both chromosomes of the cholera pathogen Vibrio cholerae.</title>
        <authorList>
            <person name="Heidelberg J.F."/>
            <person name="Eisen J.A."/>
            <person name="Nelson W.C."/>
            <person name="Clayton R.A."/>
            <person name="Gwinn M.L."/>
            <person name="Dodson R.J."/>
            <person name="Haft D.H."/>
            <person name="Hickey E.K."/>
            <person name="Peterson J.D."/>
            <person name="Umayam L.A."/>
            <person name="Gill S.R."/>
            <person name="Nelson K.E."/>
            <person name="Read T.D."/>
            <person name="Tettelin H."/>
            <person name="Richardson D.L."/>
            <person name="Ermolaeva M.D."/>
            <person name="Vamathevan J.J."/>
            <person name="Bass S."/>
            <person name="Qin H."/>
            <person name="Dragoi I."/>
            <person name="Sellers P."/>
            <person name="McDonald L.A."/>
            <person name="Utterback T.R."/>
            <person name="Fleischmann R.D."/>
            <person name="Nierman W.C."/>
            <person name="White O."/>
            <person name="Salzberg S.L."/>
            <person name="Smith H.O."/>
            <person name="Colwell R.R."/>
            <person name="Mekalanos J.J."/>
            <person name="Venter J.C."/>
            <person name="Fraser C.M."/>
        </authorList>
    </citation>
    <scope>NUCLEOTIDE SEQUENCE [LARGE SCALE GENOMIC DNA]</scope>
    <source>
        <strain>ATCC 39315 / El Tor Inaba N16961</strain>
    </source>
</reference>
<name>SSRP_VIBCH</name>
<sequence length="161" mass="18637">MTKKKTNTKAGSNTIALNKKARHEYFIEDEFEAGMELQGWEVKSLRQGKANIAESYVYIKDGEAFISGMTIIPLQQASTHVVANPTRIRKLLLSRRELDNLFGRINREGMTLTALSLYWSRSWVKIKIGVAKGKKLHDKREDLKEKEWQRQKDRVMKSALR</sequence>
<protein>
    <recommendedName>
        <fullName evidence="1">SsrA-binding protein</fullName>
    </recommendedName>
    <alternativeName>
        <fullName evidence="1">Small protein B</fullName>
    </alternativeName>
</protein>
<keyword id="KW-0963">Cytoplasm</keyword>
<keyword id="KW-1185">Reference proteome</keyword>
<keyword id="KW-0694">RNA-binding</keyword>
<feature type="chain" id="PRO_0000103063" description="SsrA-binding protein">
    <location>
        <begin position="1"/>
        <end position="161"/>
    </location>
</feature>
<comment type="function">
    <text evidence="1">Required for rescue of stalled ribosomes mediated by trans-translation. Binds to transfer-messenger RNA (tmRNA), required for stable association of tmRNA with ribosomes. tmRNA and SmpB together mimic tRNA shape, replacing the anticodon stem-loop with SmpB. tmRNA is encoded by the ssrA gene; the 2 termini fold to resemble tRNA(Ala) and it encodes a 'tag peptide', a short internal open reading frame. During trans-translation Ala-aminoacylated tmRNA acts like a tRNA, entering the A-site of stalled ribosomes, displacing the stalled mRNA. The ribosome then switches to translate the ORF on the tmRNA; the nascent peptide is terminated with the 'tag peptide' encoded by the tmRNA and targeted for degradation. The ribosome is freed to recommence translation, which seems to be the essential function of trans-translation.</text>
</comment>
<comment type="subcellular location">
    <subcellularLocation>
        <location evidence="1">Cytoplasm</location>
    </subcellularLocation>
    <text evidence="1">The tmRNA-SmpB complex associates with stalled 70S ribosomes.</text>
</comment>
<comment type="similarity">
    <text evidence="1">Belongs to the SmpB family.</text>
</comment>
<gene>
    <name evidence="1" type="primary">smpB</name>
    <name type="ordered locus">VC_0848</name>
</gene>
<organism>
    <name type="scientific">Vibrio cholerae serotype O1 (strain ATCC 39315 / El Tor Inaba N16961)</name>
    <dbReference type="NCBI Taxonomy" id="243277"/>
    <lineage>
        <taxon>Bacteria</taxon>
        <taxon>Pseudomonadati</taxon>
        <taxon>Pseudomonadota</taxon>
        <taxon>Gammaproteobacteria</taxon>
        <taxon>Vibrionales</taxon>
        <taxon>Vibrionaceae</taxon>
        <taxon>Vibrio</taxon>
    </lineage>
</organism>
<proteinExistence type="inferred from homology"/>
<evidence type="ECO:0000255" key="1">
    <source>
        <dbReference type="HAMAP-Rule" id="MF_00023"/>
    </source>
</evidence>